<proteinExistence type="evidence at protein level"/>
<accession>Q9URB1</accession>
<keyword id="KW-0903">Direct protein sequencing</keyword>
<keyword id="KW-0376">Hydrogen peroxide</keyword>
<keyword id="KW-0408">Iron</keyword>
<keyword id="KW-0439">Lignin degradation</keyword>
<keyword id="KW-0464">Manganese</keyword>
<keyword id="KW-0479">Metal-binding</keyword>
<keyword id="KW-0560">Oxidoreductase</keyword>
<keyword id="KW-0575">Peroxidase</keyword>
<keyword id="KW-0964">Secreted</keyword>
<dbReference type="EC" id="1.11.1.13"/>
<dbReference type="PIR" id="C44907">
    <property type="entry name" value="C44907"/>
</dbReference>
<dbReference type="SABIO-RK" id="Q9URB1"/>
<dbReference type="GO" id="GO:0005576">
    <property type="term" value="C:extracellular region"/>
    <property type="evidence" value="ECO:0007669"/>
    <property type="project" value="UniProtKB-SubCell"/>
</dbReference>
<dbReference type="GO" id="GO:0016689">
    <property type="term" value="F:manganese peroxidase activity"/>
    <property type="evidence" value="ECO:0007669"/>
    <property type="project" value="UniProtKB-EC"/>
</dbReference>
<dbReference type="GO" id="GO:0046872">
    <property type="term" value="F:metal ion binding"/>
    <property type="evidence" value="ECO:0007669"/>
    <property type="project" value="UniProtKB-KW"/>
</dbReference>
<dbReference type="GO" id="GO:0042744">
    <property type="term" value="P:hydrogen peroxide catabolic process"/>
    <property type="evidence" value="ECO:0007669"/>
    <property type="project" value="UniProtKB-KW"/>
</dbReference>
<dbReference type="GO" id="GO:0046274">
    <property type="term" value="P:lignin catabolic process"/>
    <property type="evidence" value="ECO:0007669"/>
    <property type="project" value="UniProtKB-KW"/>
</dbReference>
<feature type="chain" id="PRO_0000055614" description="Manganese peroxidase H5">
    <location>
        <begin position="1" status="less than"/>
        <end position="20" status="greater than"/>
    </location>
</feature>
<feature type="non-terminal residue">
    <location>
        <position position="1"/>
    </location>
</feature>
<feature type="non-terminal residue">
    <location>
        <position position="20"/>
    </location>
</feature>
<name>PEM5_PHACH</name>
<organism>
    <name type="scientific">Phanerodontia chrysosporium</name>
    <name type="common">White-rot fungus</name>
    <name type="synonym">Sporotrichum pruinosum</name>
    <dbReference type="NCBI Taxonomy" id="2822231"/>
    <lineage>
        <taxon>Eukaryota</taxon>
        <taxon>Fungi</taxon>
        <taxon>Dikarya</taxon>
        <taxon>Basidiomycota</taxon>
        <taxon>Agaricomycotina</taxon>
        <taxon>Agaricomycetes</taxon>
        <taxon>Polyporales</taxon>
        <taxon>Phanerochaetaceae</taxon>
        <taxon>Phanerodontia</taxon>
    </lineage>
</organism>
<comment type="function">
    <text>Catalyzes the oxidation of Mn(2+) to Mn(3+). The latter, acting as a diffusible redox mediator, is capable of oxidizing a variety of lignin compounds.</text>
</comment>
<comment type="catalytic activity">
    <reaction>
        <text>2 Mn(2+) + H2O2 + 2 H(+) = 2 Mn(3+) + 2 H2O</text>
        <dbReference type="Rhea" id="RHEA:22776"/>
        <dbReference type="ChEBI" id="CHEBI:15377"/>
        <dbReference type="ChEBI" id="CHEBI:15378"/>
        <dbReference type="ChEBI" id="CHEBI:16240"/>
        <dbReference type="ChEBI" id="CHEBI:29035"/>
        <dbReference type="ChEBI" id="CHEBI:29041"/>
        <dbReference type="EC" id="1.11.1.13"/>
    </reaction>
</comment>
<comment type="subcellular location">
    <subcellularLocation>
        <location>Secreted</location>
    </subcellularLocation>
</comment>
<comment type="similarity">
    <text evidence="1">Belongs to the peroxidase family. Ligninase subfamily.</text>
</comment>
<reference key="1">
    <citation type="journal article" date="1992" name="J. Bacteriol.">
        <title>Heterogeneity and regulation of manganese peroxidases from Phanerochaete chrysosporium.</title>
        <authorList>
            <person name="Pease E.A."/>
            <person name="Tien M."/>
        </authorList>
    </citation>
    <scope>PROTEIN SEQUENCE</scope>
</reference>
<sequence length="20" mass="2048">AVXHPGTXVSXAAXXXFIPL</sequence>
<evidence type="ECO:0000305" key="1"/>
<protein>
    <recommendedName>
        <fullName>Manganese peroxidase H5</fullName>
        <ecNumber>1.11.1.13</ecNumber>
    </recommendedName>
    <alternativeName>
        <fullName>Peroxidase manganese-dependent H5</fullName>
    </alternativeName>
</protein>